<evidence type="ECO:0000250" key="1"/>
<evidence type="ECO:0000255" key="2">
    <source>
        <dbReference type="PROSITE-ProRule" id="PRU00541"/>
    </source>
</evidence>
<evidence type="ECO:0000255" key="3">
    <source>
        <dbReference type="PROSITE-ProRule" id="PRU00542"/>
    </source>
</evidence>
<evidence type="ECO:0000256" key="4">
    <source>
        <dbReference type="SAM" id="MobiDB-lite"/>
    </source>
</evidence>
<evidence type="ECO:0000305" key="5"/>
<sequence length="732" mass="82634">MIEDDGMLLNFSTDTTEDNNDSKFNSGKVTGGRWKERRKLKMMMEGREPVKRKTFEELENSDMDTNKKPKSDSSGRKSYNQQSNNESVKDVVRPVVSKVNPSQVNTQIVSSLFTAARQVETSVNINEHDDKEEINPSNAPLAADNFDSLKIEQQLVNHLNEKMRIQKPTSIQKLVLPQLLSSKNNDLFIHAQTGSGKTLAFALPILSKILSMKTRVDRKSGCFAIFITPTRELATQIYHVLSELTNCCHYLVPCLLIGGESKKSEKARLRKGCNFIIGTPGRILDHFQNTQSVKEQLAVSLRYVVLDEADKLMELGFEETLTDILKLIHDISLNTSVYPQLPSRIMHILCSATSKGSVTKLGNVALQNYKMISNSHVTNELENATVPDQLLQKIAIVPPKLRLVTLAATLDSIHRKHIEQKKKKLDYVSRTVVFLSCSDSVNFHFEAFSSSDANHRNLVGESARLLTKGNDILPSFDPENDPDFICYKLHGSLSQQIRSSTLQHFSKTNENVKGKHLVLFCTDVASRGLDLPEIGTVIELDPPFAVEDHLHRIGRTARAGKHGESLLFLLPGEEEGYMEYIKPYHTKGWKLVNYTNDLLKPSFQNVNVKRSDKETSKNVEEWDTNATTWHLNVERRVLEDSSFKDIAMKGYASHIRAYATHISKEKKFFNVKCLHLGHLAKSFALRERPKTMGLQNTKNGGEAKKNSKESAKNKMFRLARMAVKQSSGEFNY</sequence>
<feature type="chain" id="PRO_0000310219" description="ATP-dependent RNA helicase DBP7">
    <location>
        <begin position="1"/>
        <end position="732"/>
    </location>
</feature>
<feature type="domain" description="Helicase ATP-binding" evidence="2">
    <location>
        <begin position="178"/>
        <end position="372"/>
    </location>
</feature>
<feature type="domain" description="Helicase C-terminal" evidence="3">
    <location>
        <begin position="420"/>
        <end position="599"/>
    </location>
</feature>
<feature type="region of interest" description="Disordered" evidence="4">
    <location>
        <begin position="1"/>
        <end position="91"/>
    </location>
</feature>
<feature type="region of interest" description="Disordered" evidence="4">
    <location>
        <begin position="692"/>
        <end position="711"/>
    </location>
</feature>
<feature type="short sequence motif" description="Q motif">
    <location>
        <begin position="144"/>
        <end position="173"/>
    </location>
</feature>
<feature type="short sequence motif" description="DEAD box">
    <location>
        <begin position="307"/>
        <end position="310"/>
    </location>
</feature>
<feature type="compositionally biased region" description="Basic and acidic residues" evidence="4">
    <location>
        <begin position="42"/>
        <end position="56"/>
    </location>
</feature>
<feature type="compositionally biased region" description="Basic and acidic residues" evidence="4">
    <location>
        <begin position="64"/>
        <end position="75"/>
    </location>
</feature>
<feature type="compositionally biased region" description="Polar residues" evidence="4">
    <location>
        <begin position="76"/>
        <end position="86"/>
    </location>
</feature>
<feature type="compositionally biased region" description="Basic and acidic residues" evidence="4">
    <location>
        <begin position="701"/>
        <end position="711"/>
    </location>
</feature>
<feature type="binding site" evidence="2">
    <location>
        <begin position="191"/>
        <end position="198"/>
    </location>
    <ligand>
        <name>ATP</name>
        <dbReference type="ChEBI" id="CHEBI:30616"/>
    </ligand>
</feature>
<dbReference type="EC" id="3.6.4.13"/>
<dbReference type="EMBL" id="DS480434">
    <property type="protein sequence ID" value="EDO16074.1"/>
    <property type="molecule type" value="Genomic_DNA"/>
</dbReference>
<dbReference type="RefSeq" id="XP_001643932.1">
    <property type="nucleotide sequence ID" value="XM_001643882.1"/>
</dbReference>
<dbReference type="SMR" id="A7TNT1"/>
<dbReference type="FunCoup" id="A7TNT1">
    <property type="interactions" value="837"/>
</dbReference>
<dbReference type="STRING" id="436907.A7TNT1"/>
<dbReference type="GeneID" id="5544197"/>
<dbReference type="KEGG" id="vpo:Kpol_1016p14"/>
<dbReference type="eggNOG" id="KOG0348">
    <property type="taxonomic scope" value="Eukaryota"/>
</dbReference>
<dbReference type="HOGENOM" id="CLU_003041_26_2_1"/>
<dbReference type="InParanoid" id="A7TNT1"/>
<dbReference type="OMA" id="AVHIKAD"/>
<dbReference type="OrthoDB" id="422663at2759"/>
<dbReference type="Proteomes" id="UP000000267">
    <property type="component" value="Unassembled WGS sequence"/>
</dbReference>
<dbReference type="GO" id="GO:0005730">
    <property type="term" value="C:nucleolus"/>
    <property type="evidence" value="ECO:0007669"/>
    <property type="project" value="UniProtKB-SubCell"/>
</dbReference>
<dbReference type="GO" id="GO:0005524">
    <property type="term" value="F:ATP binding"/>
    <property type="evidence" value="ECO:0007669"/>
    <property type="project" value="UniProtKB-KW"/>
</dbReference>
<dbReference type="GO" id="GO:0016887">
    <property type="term" value="F:ATP hydrolysis activity"/>
    <property type="evidence" value="ECO:0007669"/>
    <property type="project" value="RHEA"/>
</dbReference>
<dbReference type="GO" id="GO:0003723">
    <property type="term" value="F:RNA binding"/>
    <property type="evidence" value="ECO:0007669"/>
    <property type="project" value="UniProtKB-KW"/>
</dbReference>
<dbReference type="GO" id="GO:0003724">
    <property type="term" value="F:RNA helicase activity"/>
    <property type="evidence" value="ECO:0007669"/>
    <property type="project" value="UniProtKB-EC"/>
</dbReference>
<dbReference type="GO" id="GO:0000464">
    <property type="term" value="P:endonucleolytic cleavage in ITS1 upstream of 5.8S rRNA from tricistronic rRNA transcript (SSU-rRNA, 5.8S rRNA, LSU-rRNA)"/>
    <property type="evidence" value="ECO:0007669"/>
    <property type="project" value="EnsemblFungi"/>
</dbReference>
<dbReference type="CDD" id="cd17949">
    <property type="entry name" value="DEADc_DDX31"/>
    <property type="match status" value="1"/>
</dbReference>
<dbReference type="CDD" id="cd18787">
    <property type="entry name" value="SF2_C_DEAD"/>
    <property type="match status" value="1"/>
</dbReference>
<dbReference type="FunFam" id="3.40.50.300:FF:002326">
    <property type="entry name" value="ATP-dependent RNA helicase DBP7"/>
    <property type="match status" value="1"/>
</dbReference>
<dbReference type="Gene3D" id="3.40.50.300">
    <property type="entry name" value="P-loop containing nucleotide triphosphate hydrolases"/>
    <property type="match status" value="2"/>
</dbReference>
<dbReference type="InterPro" id="IPR011545">
    <property type="entry name" value="DEAD/DEAH_box_helicase_dom"/>
</dbReference>
<dbReference type="InterPro" id="IPR014001">
    <property type="entry name" value="Helicase_ATP-bd"/>
</dbReference>
<dbReference type="InterPro" id="IPR001650">
    <property type="entry name" value="Helicase_C-like"/>
</dbReference>
<dbReference type="InterPro" id="IPR027417">
    <property type="entry name" value="P-loop_NTPase"/>
</dbReference>
<dbReference type="InterPro" id="IPR000629">
    <property type="entry name" value="RNA-helicase_DEAD-box_CS"/>
</dbReference>
<dbReference type="InterPro" id="IPR025313">
    <property type="entry name" value="SPB4-like_CTE"/>
</dbReference>
<dbReference type="PANTHER" id="PTHR24031">
    <property type="entry name" value="RNA HELICASE"/>
    <property type="match status" value="1"/>
</dbReference>
<dbReference type="Pfam" id="PF13959">
    <property type="entry name" value="CTE_SPB4"/>
    <property type="match status" value="1"/>
</dbReference>
<dbReference type="Pfam" id="PF00270">
    <property type="entry name" value="DEAD"/>
    <property type="match status" value="1"/>
</dbReference>
<dbReference type="Pfam" id="PF00271">
    <property type="entry name" value="Helicase_C"/>
    <property type="match status" value="1"/>
</dbReference>
<dbReference type="SMART" id="SM00487">
    <property type="entry name" value="DEXDc"/>
    <property type="match status" value="1"/>
</dbReference>
<dbReference type="SMART" id="SM01178">
    <property type="entry name" value="DUF4217"/>
    <property type="match status" value="1"/>
</dbReference>
<dbReference type="SMART" id="SM00490">
    <property type="entry name" value="HELICc"/>
    <property type="match status" value="1"/>
</dbReference>
<dbReference type="SUPFAM" id="SSF52540">
    <property type="entry name" value="P-loop containing nucleoside triphosphate hydrolases"/>
    <property type="match status" value="2"/>
</dbReference>
<dbReference type="PROSITE" id="PS00039">
    <property type="entry name" value="DEAD_ATP_HELICASE"/>
    <property type="match status" value="1"/>
</dbReference>
<dbReference type="PROSITE" id="PS51192">
    <property type="entry name" value="HELICASE_ATP_BIND_1"/>
    <property type="match status" value="1"/>
</dbReference>
<dbReference type="PROSITE" id="PS51194">
    <property type="entry name" value="HELICASE_CTER"/>
    <property type="match status" value="1"/>
</dbReference>
<dbReference type="PROSITE" id="PS51195">
    <property type="entry name" value="Q_MOTIF"/>
    <property type="match status" value="1"/>
</dbReference>
<organism>
    <name type="scientific">Vanderwaltozyma polyspora (strain ATCC 22028 / DSM 70294 / BCRC 21397 / CBS 2163 / NBRC 10782 / NRRL Y-8283 / UCD 57-17)</name>
    <name type="common">Kluyveromyces polysporus</name>
    <dbReference type="NCBI Taxonomy" id="436907"/>
    <lineage>
        <taxon>Eukaryota</taxon>
        <taxon>Fungi</taxon>
        <taxon>Dikarya</taxon>
        <taxon>Ascomycota</taxon>
        <taxon>Saccharomycotina</taxon>
        <taxon>Saccharomycetes</taxon>
        <taxon>Saccharomycetales</taxon>
        <taxon>Saccharomycetaceae</taxon>
        <taxon>Vanderwaltozyma</taxon>
    </lineage>
</organism>
<accession>A7TNT1</accession>
<comment type="function">
    <text evidence="1">ATP-binding RNA helicase involved in the biogenesis of 60S ribosomal subunits and is required for the normal formation of 25S and 5.8S rRNAs.</text>
</comment>
<comment type="catalytic activity">
    <reaction>
        <text>ATP + H2O = ADP + phosphate + H(+)</text>
        <dbReference type="Rhea" id="RHEA:13065"/>
        <dbReference type="ChEBI" id="CHEBI:15377"/>
        <dbReference type="ChEBI" id="CHEBI:15378"/>
        <dbReference type="ChEBI" id="CHEBI:30616"/>
        <dbReference type="ChEBI" id="CHEBI:43474"/>
        <dbReference type="ChEBI" id="CHEBI:456216"/>
        <dbReference type="EC" id="3.6.4.13"/>
    </reaction>
</comment>
<comment type="subcellular location">
    <subcellularLocation>
        <location evidence="1">Nucleus</location>
        <location evidence="1">Nucleolus</location>
    </subcellularLocation>
</comment>
<comment type="domain">
    <text>The Q motif is unique to and characteristic of the DEAD box family of RNA helicases and controls ATP binding and hydrolysis.</text>
</comment>
<comment type="similarity">
    <text evidence="5">Belongs to the DEAD box helicase family. DDX31/DBP7 subfamily.</text>
</comment>
<protein>
    <recommendedName>
        <fullName>ATP-dependent RNA helicase DBP7</fullName>
        <ecNumber>3.6.4.13</ecNumber>
    </recommendedName>
</protein>
<keyword id="KW-0067">ATP-binding</keyword>
<keyword id="KW-0347">Helicase</keyword>
<keyword id="KW-0378">Hydrolase</keyword>
<keyword id="KW-0547">Nucleotide-binding</keyword>
<keyword id="KW-0539">Nucleus</keyword>
<keyword id="KW-1185">Reference proteome</keyword>
<keyword id="KW-0690">Ribosome biogenesis</keyword>
<keyword id="KW-0694">RNA-binding</keyword>
<keyword id="KW-0698">rRNA processing</keyword>
<name>DBP7_VANPO</name>
<proteinExistence type="inferred from homology"/>
<gene>
    <name type="primary">DBP7</name>
    <name type="ORF">Kpol_1016p14</name>
</gene>
<reference key="1">
    <citation type="journal article" date="2007" name="Proc. Natl. Acad. Sci. U.S.A.">
        <title>Independent sorting-out of thousands of duplicated gene pairs in two yeast species descended from a whole-genome duplication.</title>
        <authorList>
            <person name="Scannell D.R."/>
            <person name="Frank A.C."/>
            <person name="Conant G.C."/>
            <person name="Byrne K.P."/>
            <person name="Woolfit M."/>
            <person name="Wolfe K.H."/>
        </authorList>
    </citation>
    <scope>NUCLEOTIDE SEQUENCE [LARGE SCALE GENOMIC DNA]</scope>
    <source>
        <strain>ATCC 22028 / DSM 70294 / BCRC 21397 / CBS 2163 / NBRC 10782 / NRRL Y-8283 / UCD 57-17</strain>
    </source>
</reference>